<comment type="catalytic activity">
    <reaction evidence="2">
        <text>L-histidine = trans-urocanate + NH4(+)</text>
        <dbReference type="Rhea" id="RHEA:21232"/>
        <dbReference type="ChEBI" id="CHEBI:17771"/>
        <dbReference type="ChEBI" id="CHEBI:28938"/>
        <dbReference type="ChEBI" id="CHEBI:57595"/>
        <dbReference type="EC" id="4.3.1.3"/>
    </reaction>
</comment>
<comment type="pathway">
    <text>Amino-acid degradation; L-histidine degradation into L-glutamate; N-formimidoyl-L-glutamate from L-histidine: step 1/3.</text>
</comment>
<comment type="subcellular location">
    <subcellularLocation>
        <location evidence="3">Cytoplasm</location>
    </subcellularLocation>
</comment>
<comment type="PTM">
    <text evidence="1">Contains an active site 4-methylidene-imidazol-5-one (MIO), which is formed autocatalytically by cyclization and dehydration of residues Ala-Ser-Gly.</text>
</comment>
<comment type="similarity">
    <text evidence="3">Belongs to the PAL/histidase family.</text>
</comment>
<comment type="caution">
    <text evidence="3">The gene for this protein is duplicated in strains AX3 and AX4. These strains contain a duplication of a segment of 750 kb of chromosome 2 compared to the corresponding sequence in strain AX2.</text>
</comment>
<organism>
    <name type="scientific">Dictyostelium discoideum</name>
    <name type="common">Social amoeba</name>
    <dbReference type="NCBI Taxonomy" id="44689"/>
    <lineage>
        <taxon>Eukaryota</taxon>
        <taxon>Amoebozoa</taxon>
        <taxon>Evosea</taxon>
        <taxon>Eumycetozoa</taxon>
        <taxon>Dictyostelia</taxon>
        <taxon>Dictyosteliales</taxon>
        <taxon>Dictyosteliaceae</taxon>
        <taxon>Dictyostelium</taxon>
    </lineage>
</organism>
<gene>
    <name type="ORF">DDB_G0273787</name>
</gene>
<gene>
    <name type="ORF">DDB_G0273081</name>
</gene>
<sequence>MIETNHKDNFLIDGENKNLEINDIISISKGEKNIIFTNELLEFLQKGRDQLENKLKENVAIYGINTGFGGNGDLIIPFDKLDYHQSNLLDFLTCGTGDFFNDQYVRGIQFIIIIALSRGWSGVRPMVIQTLAKHLNKGIIPQVPMHGSVGASGDLVPLSYIANVLCGKGMVKYNEKLMNASDALKITSIEPLVLKSKEGLALVNGTRVMSSVSCISINKFETIFKAAIGSIALAVEGLLASKDHYDMRIHNLKNHPGQILIAQILNKYFNTSDNNTKSSNITFNQSENVQKLDKSVQEVYSLRCAPQILGIISENISNAKIVIKREILSVNDNPLIDPYYGDVLSGGNFMGNHIARIMDGIKLDISLVANHLHSLVALMMHSEFSKGLPNSLSPNPGIYQGYKGMQISQTSLVVWLRQEAAPACIHSLTTEQFNQDIVSLGLHSANGAASMLIKLCDIVSMTLIIAFQAISLRMKSIENFKLPNKVQKLYSSIIKIIPILENDRRTDIDVREITNAILQDKLDFINLNL</sequence>
<feature type="chain" id="PRO_0000389023" description="hal-like protein DDB_G0273787/DDB_G0273081">
    <location>
        <begin position="1"/>
        <end position="529"/>
    </location>
</feature>
<feature type="modified residue" description="2,3-didehydroalanine (Ser)" evidence="2">
    <location>
        <position position="152"/>
    </location>
</feature>
<feature type="cross-link" description="5-imidazolinone (Ala-Gly)" evidence="1">
    <location>
        <begin position="151"/>
        <end position="153"/>
    </location>
</feature>
<keyword id="KW-0963">Cytoplasm</keyword>
<keyword id="KW-0369">Histidine metabolism</keyword>
<keyword id="KW-0456">Lyase</keyword>
<keyword id="KW-1185">Reference proteome</keyword>
<reference key="1">
    <citation type="journal article" date="2002" name="Nature">
        <title>Sequence and analysis of chromosome 2 of Dictyostelium discoideum.</title>
        <authorList>
            <person name="Gloeckner G."/>
            <person name="Eichinger L."/>
            <person name="Szafranski K."/>
            <person name="Pachebat J.A."/>
            <person name="Bankier A.T."/>
            <person name="Dear P.H."/>
            <person name="Lehmann R."/>
            <person name="Baumgart C."/>
            <person name="Parra G."/>
            <person name="Abril J.F."/>
            <person name="Guigo R."/>
            <person name="Kumpf K."/>
            <person name="Tunggal B."/>
            <person name="Cox E.C."/>
            <person name="Quail M.A."/>
            <person name="Platzer M."/>
            <person name="Rosenthal A."/>
            <person name="Noegel A.A."/>
        </authorList>
    </citation>
    <scope>NUCLEOTIDE SEQUENCE [LARGE SCALE GENOMIC DNA]</scope>
    <source>
        <strain>AX4</strain>
    </source>
</reference>
<reference key="2">
    <citation type="journal article" date="2005" name="Nature">
        <title>The genome of the social amoeba Dictyostelium discoideum.</title>
        <authorList>
            <person name="Eichinger L."/>
            <person name="Pachebat J.A."/>
            <person name="Gloeckner G."/>
            <person name="Rajandream M.A."/>
            <person name="Sucgang R."/>
            <person name="Berriman M."/>
            <person name="Song J."/>
            <person name="Olsen R."/>
            <person name="Szafranski K."/>
            <person name="Xu Q."/>
            <person name="Tunggal B."/>
            <person name="Kummerfeld S."/>
            <person name="Madera M."/>
            <person name="Konfortov B.A."/>
            <person name="Rivero F."/>
            <person name="Bankier A.T."/>
            <person name="Lehmann R."/>
            <person name="Hamlin N."/>
            <person name="Davies R."/>
            <person name="Gaudet P."/>
            <person name="Fey P."/>
            <person name="Pilcher K."/>
            <person name="Chen G."/>
            <person name="Saunders D."/>
            <person name="Sodergren E.J."/>
            <person name="Davis P."/>
            <person name="Kerhornou A."/>
            <person name="Nie X."/>
            <person name="Hall N."/>
            <person name="Anjard C."/>
            <person name="Hemphill L."/>
            <person name="Bason N."/>
            <person name="Farbrother P."/>
            <person name="Desany B."/>
            <person name="Just E."/>
            <person name="Morio T."/>
            <person name="Rost R."/>
            <person name="Churcher C.M."/>
            <person name="Cooper J."/>
            <person name="Haydock S."/>
            <person name="van Driessche N."/>
            <person name="Cronin A."/>
            <person name="Goodhead I."/>
            <person name="Muzny D.M."/>
            <person name="Mourier T."/>
            <person name="Pain A."/>
            <person name="Lu M."/>
            <person name="Harper D."/>
            <person name="Lindsay R."/>
            <person name="Hauser H."/>
            <person name="James K.D."/>
            <person name="Quiles M."/>
            <person name="Madan Babu M."/>
            <person name="Saito T."/>
            <person name="Buchrieser C."/>
            <person name="Wardroper A."/>
            <person name="Felder M."/>
            <person name="Thangavelu M."/>
            <person name="Johnson D."/>
            <person name="Knights A."/>
            <person name="Loulseged H."/>
            <person name="Mungall K.L."/>
            <person name="Oliver K."/>
            <person name="Price C."/>
            <person name="Quail M.A."/>
            <person name="Urushihara H."/>
            <person name="Hernandez J."/>
            <person name="Rabbinowitsch E."/>
            <person name="Steffen D."/>
            <person name="Sanders M."/>
            <person name="Ma J."/>
            <person name="Kohara Y."/>
            <person name="Sharp S."/>
            <person name="Simmonds M.N."/>
            <person name="Spiegler S."/>
            <person name="Tivey A."/>
            <person name="Sugano S."/>
            <person name="White B."/>
            <person name="Walker D."/>
            <person name="Woodward J.R."/>
            <person name="Winckler T."/>
            <person name="Tanaka Y."/>
            <person name="Shaulsky G."/>
            <person name="Schleicher M."/>
            <person name="Weinstock G.M."/>
            <person name="Rosenthal A."/>
            <person name="Cox E.C."/>
            <person name="Chisholm R.L."/>
            <person name="Gibbs R.A."/>
            <person name="Loomis W.F."/>
            <person name="Platzer M."/>
            <person name="Kay R.R."/>
            <person name="Williams J.G."/>
            <person name="Dear P.H."/>
            <person name="Noegel A.A."/>
            <person name="Barrell B.G."/>
            <person name="Kuspa A."/>
        </authorList>
    </citation>
    <scope>NUCLEOTIDE SEQUENCE [LARGE SCALE GENOMIC DNA]</scope>
    <source>
        <strain>AX4</strain>
    </source>
</reference>
<protein>
    <recommendedName>
        <fullName>hal-like protein DDB_G0273787/DDB_G0273081</fullName>
        <ecNumber>4.3.1.3</ecNumber>
    </recommendedName>
</protein>
<evidence type="ECO:0000250" key="1"/>
<evidence type="ECO:0000255" key="2">
    <source>
        <dbReference type="PROSITE-ProRule" id="PRU10122"/>
    </source>
</evidence>
<evidence type="ECO:0000305" key="3"/>
<dbReference type="EC" id="4.3.1.3"/>
<dbReference type="EMBL" id="AAFI02000011">
    <property type="protein sequence ID" value="EAL70584.1"/>
    <property type="molecule type" value="Genomic_DNA"/>
</dbReference>
<dbReference type="EMBL" id="AAFI02000009">
    <property type="protein sequence ID" value="EAL70758.1"/>
    <property type="molecule type" value="Genomic_DNA"/>
</dbReference>
<dbReference type="RefSeq" id="XP_644510.1">
    <property type="nucleotide sequence ID" value="XM_639418.1"/>
</dbReference>
<dbReference type="RefSeq" id="XP_644740.1">
    <property type="nucleotide sequence ID" value="XM_639648.1"/>
</dbReference>
<dbReference type="SMR" id="Q556V9"/>
<dbReference type="STRING" id="44689.Q556V9"/>
<dbReference type="PaxDb" id="44689-DDB0231725"/>
<dbReference type="EnsemblProtists" id="EAL70584">
    <property type="protein sequence ID" value="EAL70584"/>
    <property type="gene ID" value="DDB_G0273787"/>
</dbReference>
<dbReference type="EnsemblProtists" id="EAL70758">
    <property type="protein sequence ID" value="EAL70758"/>
    <property type="gene ID" value="DDB_G0273081"/>
</dbReference>
<dbReference type="GeneID" id="8618840"/>
<dbReference type="GeneID" id="8619136"/>
<dbReference type="KEGG" id="ddi:DDB_G0273081"/>
<dbReference type="KEGG" id="ddi:DDB_G0273787"/>
<dbReference type="dictyBase" id="DDB_G0273081"/>
<dbReference type="dictyBase" id="DDB_G0273787"/>
<dbReference type="VEuPathDB" id="AmoebaDB:DDB_G0273787"/>
<dbReference type="eggNOG" id="KOG0222">
    <property type="taxonomic scope" value="Eukaryota"/>
</dbReference>
<dbReference type="HOGENOM" id="CLU_014801_4_0_1"/>
<dbReference type="InParanoid" id="Q556V9"/>
<dbReference type="OMA" id="GTRRNFH"/>
<dbReference type="PhylomeDB" id="Q556V9"/>
<dbReference type="UniPathway" id="UPA00379">
    <property type="reaction ID" value="UER00549"/>
</dbReference>
<dbReference type="PRO" id="PR:Q556V9"/>
<dbReference type="Proteomes" id="UP000002195">
    <property type="component" value="Chromosome 2"/>
</dbReference>
<dbReference type="GO" id="GO:0005737">
    <property type="term" value="C:cytoplasm"/>
    <property type="evidence" value="ECO:0007669"/>
    <property type="project" value="UniProtKB-SubCell"/>
</dbReference>
<dbReference type="GO" id="GO:0016841">
    <property type="term" value="F:ammonia-lyase activity"/>
    <property type="evidence" value="ECO:0000318"/>
    <property type="project" value="GO_Central"/>
</dbReference>
<dbReference type="GO" id="GO:0004397">
    <property type="term" value="F:histidine ammonia-lyase activity"/>
    <property type="evidence" value="ECO:0007669"/>
    <property type="project" value="UniProtKB-EC"/>
</dbReference>
<dbReference type="GO" id="GO:0019556">
    <property type="term" value="P:L-histidine catabolic process to glutamate and formamide"/>
    <property type="evidence" value="ECO:0007669"/>
    <property type="project" value="UniProtKB-UniPathway"/>
</dbReference>
<dbReference type="GO" id="GO:0019557">
    <property type="term" value="P:L-histidine catabolic process to glutamate and formate"/>
    <property type="evidence" value="ECO:0007669"/>
    <property type="project" value="UniProtKB-UniPathway"/>
</dbReference>
<dbReference type="CDD" id="cd00332">
    <property type="entry name" value="PAL-HAL"/>
    <property type="match status" value="1"/>
</dbReference>
<dbReference type="Gene3D" id="1.20.200.10">
    <property type="entry name" value="Fumarase/aspartase (Central domain)"/>
    <property type="match status" value="1"/>
</dbReference>
<dbReference type="Gene3D" id="1.10.275.10">
    <property type="entry name" value="Fumarase/aspartase (N-terminal domain)"/>
    <property type="match status" value="1"/>
</dbReference>
<dbReference type="InterPro" id="IPR001106">
    <property type="entry name" value="Aromatic_Lyase"/>
</dbReference>
<dbReference type="InterPro" id="IPR024083">
    <property type="entry name" value="Fumarase/histidase_N"/>
</dbReference>
<dbReference type="InterPro" id="IPR008948">
    <property type="entry name" value="L-Aspartase-like"/>
</dbReference>
<dbReference type="InterPro" id="IPR022313">
    <property type="entry name" value="Phe/His_NH3-lyase_AS"/>
</dbReference>
<dbReference type="PANTHER" id="PTHR10362">
    <property type="entry name" value="HISTIDINE AMMONIA-LYASE"/>
    <property type="match status" value="1"/>
</dbReference>
<dbReference type="Pfam" id="PF00221">
    <property type="entry name" value="Lyase_aromatic"/>
    <property type="match status" value="1"/>
</dbReference>
<dbReference type="SUPFAM" id="SSF48557">
    <property type="entry name" value="L-aspartase-like"/>
    <property type="match status" value="1"/>
</dbReference>
<dbReference type="PROSITE" id="PS00488">
    <property type="entry name" value="PAL_HISTIDASE"/>
    <property type="match status" value="1"/>
</dbReference>
<accession>Q556V9</accession>
<accession>Q86AJ4</accession>
<name>HALL_DICDI</name>
<proteinExistence type="inferred from homology"/>